<name>SCMU_MYCS2</name>
<comment type="function">
    <text evidence="4">Catalyzes the Claisen rearrangement of chorismate to prephenate. May play some role in the pathogenicity.</text>
</comment>
<comment type="catalytic activity">
    <reaction evidence="4">
        <text>chorismate = prephenate</text>
        <dbReference type="Rhea" id="RHEA:13897"/>
        <dbReference type="ChEBI" id="CHEBI:29748"/>
        <dbReference type="ChEBI" id="CHEBI:29934"/>
        <dbReference type="EC" id="5.4.99.5"/>
    </reaction>
    <physiologicalReaction direction="left-to-right" evidence="4">
        <dbReference type="Rhea" id="RHEA:13898"/>
    </physiologicalReaction>
</comment>
<comment type="pathway">
    <text evidence="6">Metabolic intermediate biosynthesis; prephenate biosynthesis; prephenate from chorismate: step 1/1.</text>
</comment>
<comment type="subunit">
    <text evidence="1">Homodimer.</text>
</comment>
<comment type="subcellular location">
    <subcellularLocation>
        <location evidence="1">Secreted</location>
    </subcellularLocation>
</comment>
<comment type="sequence caution" evidence="6">
    <conflict type="erroneous initiation">
        <sequence resource="EMBL-CDS" id="AFP38535"/>
    </conflict>
    <text>Extended N-terminus.</text>
</comment>
<feature type="signal peptide" evidence="2">
    <location>
        <begin position="1"/>
        <end position="20"/>
    </location>
</feature>
<feature type="chain" id="PRO_0000414905" description="Secreted chorismate mutase">
    <location>
        <begin position="21"/>
        <end position="181"/>
    </location>
</feature>
<feature type="domain" description="Chorismate mutase" evidence="3">
    <location>
        <begin position="21"/>
        <end position="100"/>
    </location>
</feature>
<feature type="binding site" evidence="1">
    <location>
        <position position="36"/>
    </location>
    <ligand>
        <name>substrate</name>
    </ligand>
</feature>
<feature type="binding site" evidence="1">
    <location>
        <position position="47"/>
    </location>
    <ligand>
        <name>substrate</name>
    </ligand>
</feature>
<feature type="binding site" evidence="1">
    <location>
        <position position="56"/>
    </location>
    <ligand>
        <name>substrate</name>
    </ligand>
</feature>
<feature type="binding site" evidence="1">
    <location>
        <begin position="59"/>
        <end position="63"/>
    </location>
    <ligand>
        <name>substrate</name>
    </ligand>
</feature>
<feature type="binding site" evidence="1">
    <location>
        <begin position="92"/>
        <end position="96"/>
    </location>
    <ligand>
        <name>substrate</name>
    </ligand>
</feature>
<feature type="binding site" evidence="1">
    <location>
        <position position="121"/>
    </location>
    <ligand>
        <name>substrate</name>
    </ligand>
</feature>
<feature type="disulfide bond" evidence="1">
    <location>
        <begin position="147"/>
        <end position="180"/>
    </location>
</feature>
<organism>
    <name type="scientific">Mycolicibacterium smegmatis (strain ATCC 700084 / mc(2)155)</name>
    <name type="common">Mycobacterium smegmatis</name>
    <dbReference type="NCBI Taxonomy" id="246196"/>
    <lineage>
        <taxon>Bacteria</taxon>
        <taxon>Bacillati</taxon>
        <taxon>Actinomycetota</taxon>
        <taxon>Actinomycetes</taxon>
        <taxon>Mycobacteriales</taxon>
        <taxon>Mycobacteriaceae</taxon>
        <taxon>Mycolicibacterium</taxon>
    </lineage>
</organism>
<dbReference type="EC" id="5.4.99.5" evidence="4"/>
<dbReference type="EMBL" id="CP000480">
    <property type="protein sequence ID" value="ABK74300.1"/>
    <property type="molecule type" value="Genomic_DNA"/>
</dbReference>
<dbReference type="EMBL" id="CP001663">
    <property type="protein sequence ID" value="AFP38535.1"/>
    <property type="status" value="ALT_INIT"/>
    <property type="molecule type" value="Genomic_DNA"/>
</dbReference>
<dbReference type="RefSeq" id="WP_011728162.1">
    <property type="nucleotide sequence ID" value="NZ_SIJM01000021.1"/>
</dbReference>
<dbReference type="RefSeq" id="YP_886469.1">
    <property type="nucleotide sequence ID" value="NC_008596.1"/>
</dbReference>
<dbReference type="SMR" id="A0QU81"/>
<dbReference type="STRING" id="246196.MSMEG_2111"/>
<dbReference type="PaxDb" id="246196-MSMEI_2064"/>
<dbReference type="KEGG" id="msb:LJ00_10520"/>
<dbReference type="KEGG" id="msg:MSMEI_2064"/>
<dbReference type="KEGG" id="msm:MSMEG_2111"/>
<dbReference type="PATRIC" id="fig|246196.19.peg.2087"/>
<dbReference type="eggNOG" id="COG1605">
    <property type="taxonomic scope" value="Bacteria"/>
</dbReference>
<dbReference type="OrthoDB" id="3825510at2"/>
<dbReference type="BRENDA" id="5.4.99.5">
    <property type="organism ID" value="3512"/>
</dbReference>
<dbReference type="UniPathway" id="UPA00120">
    <property type="reaction ID" value="UER00203"/>
</dbReference>
<dbReference type="Proteomes" id="UP000000757">
    <property type="component" value="Chromosome"/>
</dbReference>
<dbReference type="Proteomes" id="UP000006158">
    <property type="component" value="Chromosome"/>
</dbReference>
<dbReference type="GO" id="GO:0005576">
    <property type="term" value="C:extracellular region"/>
    <property type="evidence" value="ECO:0007669"/>
    <property type="project" value="UniProtKB-SubCell"/>
</dbReference>
<dbReference type="GO" id="GO:0004106">
    <property type="term" value="F:chorismate mutase activity"/>
    <property type="evidence" value="ECO:0000314"/>
    <property type="project" value="UniProtKB"/>
</dbReference>
<dbReference type="GO" id="GO:0046417">
    <property type="term" value="P:chorismate metabolic process"/>
    <property type="evidence" value="ECO:0000314"/>
    <property type="project" value="UniProtKB"/>
</dbReference>
<dbReference type="GO" id="GO:0009697">
    <property type="term" value="P:salicylic acid biosynthetic process"/>
    <property type="evidence" value="ECO:0007669"/>
    <property type="project" value="TreeGrafter"/>
</dbReference>
<dbReference type="Gene3D" id="1.20.59.10">
    <property type="entry name" value="Chorismate mutase"/>
    <property type="match status" value="1"/>
</dbReference>
<dbReference type="InterPro" id="IPR036263">
    <property type="entry name" value="Chorismate_II_sf"/>
</dbReference>
<dbReference type="InterPro" id="IPR051331">
    <property type="entry name" value="Chorismate_mutase-related"/>
</dbReference>
<dbReference type="InterPro" id="IPR008240">
    <property type="entry name" value="Chorismate_mutase_periplasmic"/>
</dbReference>
<dbReference type="InterPro" id="IPR036979">
    <property type="entry name" value="CM_dom_sf"/>
</dbReference>
<dbReference type="InterPro" id="IPR002701">
    <property type="entry name" value="CM_II_prokaryot"/>
</dbReference>
<dbReference type="NCBIfam" id="TIGR01806">
    <property type="entry name" value="CM_mono2"/>
    <property type="match status" value="1"/>
</dbReference>
<dbReference type="NCBIfam" id="NF006741">
    <property type="entry name" value="PRK09269.1"/>
    <property type="match status" value="1"/>
</dbReference>
<dbReference type="PANTHER" id="PTHR38041">
    <property type="entry name" value="CHORISMATE MUTASE"/>
    <property type="match status" value="1"/>
</dbReference>
<dbReference type="PANTHER" id="PTHR38041:SF2">
    <property type="entry name" value="SECRETED CHORISMATE MUTASE"/>
    <property type="match status" value="1"/>
</dbReference>
<dbReference type="Pfam" id="PF01817">
    <property type="entry name" value="CM_2"/>
    <property type="match status" value="1"/>
</dbReference>
<dbReference type="PIRSF" id="PIRSF026640">
    <property type="entry name" value="Peripl_chor_mut"/>
    <property type="match status" value="1"/>
</dbReference>
<dbReference type="SMART" id="SM00830">
    <property type="entry name" value="CM_2"/>
    <property type="match status" value="1"/>
</dbReference>
<dbReference type="SUPFAM" id="SSF48600">
    <property type="entry name" value="Chorismate mutase II"/>
    <property type="match status" value="1"/>
</dbReference>
<dbReference type="PROSITE" id="PS51168">
    <property type="entry name" value="CHORISMATE_MUT_2"/>
    <property type="match status" value="1"/>
</dbReference>
<accession>A0QU81</accession>
<accession>I7FAF6</accession>
<sequence>MLASVALAALAGVGTPHATADDASPLVPLVDAAAQRLQTADPVAASKFRSGGAIDDPDREQQVIAAVTGDATRHNIDPGYVHDVFRNQIDATSSVEHTRFAQWKLDPAAAPSSAPDLSESRQKIDTLNRTMVDEIARQWPVLHSPVCRPDLDRALDAVATARGFDPVYRHALEYATHSYCR</sequence>
<keyword id="KW-1015">Disulfide bond</keyword>
<keyword id="KW-0413">Isomerase</keyword>
<keyword id="KW-1185">Reference proteome</keyword>
<keyword id="KW-0964">Secreted</keyword>
<keyword id="KW-0732">Signal</keyword>
<evidence type="ECO:0000250" key="1">
    <source>
        <dbReference type="UniProtKB" id="P9WIB9"/>
    </source>
</evidence>
<evidence type="ECO:0000255" key="2"/>
<evidence type="ECO:0000255" key="3">
    <source>
        <dbReference type="PROSITE-ProRule" id="PRU00515"/>
    </source>
</evidence>
<evidence type="ECO:0000269" key="4">
    <source>
    </source>
</evidence>
<evidence type="ECO:0000303" key="5">
    <source>
    </source>
</evidence>
<evidence type="ECO:0000305" key="6"/>
<protein>
    <recommendedName>
        <fullName evidence="6">Secreted chorismate mutase</fullName>
        <shortName evidence="5">CM</shortName>
        <ecNumber evidence="4">5.4.99.5</ecNumber>
    </recommendedName>
</protein>
<reference key="1">
    <citation type="submission" date="2006-10" db="EMBL/GenBank/DDBJ databases">
        <authorList>
            <person name="Fleischmann R.D."/>
            <person name="Dodson R.J."/>
            <person name="Haft D.H."/>
            <person name="Merkel J.S."/>
            <person name="Nelson W.C."/>
            <person name="Fraser C.M."/>
        </authorList>
    </citation>
    <scope>NUCLEOTIDE SEQUENCE [LARGE SCALE GENOMIC DNA]</scope>
    <source>
        <strain>ATCC 700084 / mc(2)155</strain>
    </source>
</reference>
<reference key="2">
    <citation type="journal article" date="2007" name="Genome Biol.">
        <title>Interrupted coding sequences in Mycobacterium smegmatis: authentic mutations or sequencing errors?</title>
        <authorList>
            <person name="Deshayes C."/>
            <person name="Perrodou E."/>
            <person name="Gallien S."/>
            <person name="Euphrasie D."/>
            <person name="Schaeffer C."/>
            <person name="Van-Dorsselaer A."/>
            <person name="Poch O."/>
            <person name="Lecompte O."/>
            <person name="Reyrat J.-M."/>
        </authorList>
    </citation>
    <scope>NUCLEOTIDE SEQUENCE [LARGE SCALE GENOMIC DNA]</scope>
    <source>
        <strain>ATCC 700084 / mc(2)155</strain>
    </source>
</reference>
<reference key="3">
    <citation type="journal article" date="2009" name="Genome Res.">
        <title>Ortho-proteogenomics: multiple proteomes investigation through orthology and a new MS-based protocol.</title>
        <authorList>
            <person name="Gallien S."/>
            <person name="Perrodou E."/>
            <person name="Carapito C."/>
            <person name="Deshayes C."/>
            <person name="Reyrat J.-M."/>
            <person name="Van Dorsselaer A."/>
            <person name="Poch O."/>
            <person name="Schaeffer C."/>
            <person name="Lecompte O."/>
        </authorList>
    </citation>
    <scope>NUCLEOTIDE SEQUENCE [LARGE SCALE GENOMIC DNA]</scope>
    <source>
        <strain>ATCC 700084 / mc(2)155</strain>
    </source>
</reference>
<reference key="4">
    <citation type="journal article" date="2008" name="J. Bacteriol.">
        <title>The two chorismate mutases from both Mycobacterium tuberculosis and Mycobacterium smegmatis: biochemical analysis and limited regulation of promoter activity by aromatic amino acids.</title>
        <authorList>
            <person name="Schneider C.Z."/>
            <person name="Parish T."/>
            <person name="Basso L.A."/>
            <person name="Santos D.S."/>
        </authorList>
    </citation>
    <scope>FUNCTION AS A CHORISMATE MUTASE</scope>
    <scope>CATALYTIC ACTIVITY</scope>
</reference>
<proteinExistence type="evidence at protein level"/>
<gene>
    <name type="ordered locus">MSMEG_2111</name>
    <name type="ordered locus">MSMEI_2064</name>
</gene>